<feature type="chain" id="PRO_1000006208" description="Elongation factor Ts">
    <location>
        <begin position="1"/>
        <end position="285"/>
    </location>
</feature>
<feature type="region of interest" description="Involved in Mg(2+) ion dislocation from EF-Tu" evidence="1">
    <location>
        <begin position="82"/>
        <end position="85"/>
    </location>
</feature>
<reference key="1">
    <citation type="submission" date="2007-02" db="EMBL/GenBank/DDBJ databases">
        <title>Complete sequence of chromosome of Yersinia pestis Pestoides F.</title>
        <authorList>
            <consortium name="US DOE Joint Genome Institute"/>
            <person name="Copeland A."/>
            <person name="Lucas S."/>
            <person name="Lapidus A."/>
            <person name="Barry K."/>
            <person name="Detter J.C."/>
            <person name="Glavina del Rio T."/>
            <person name="Hammon N."/>
            <person name="Israni S."/>
            <person name="Dalin E."/>
            <person name="Tice H."/>
            <person name="Pitluck S."/>
            <person name="Di Bartolo G."/>
            <person name="Chain P."/>
            <person name="Malfatti S."/>
            <person name="Shin M."/>
            <person name="Vergez L."/>
            <person name="Schmutz J."/>
            <person name="Larimer F."/>
            <person name="Land M."/>
            <person name="Hauser L."/>
            <person name="Worsham P."/>
            <person name="Chu M."/>
            <person name="Bearden S."/>
            <person name="Garcia E."/>
            <person name="Richardson P."/>
        </authorList>
    </citation>
    <scope>NUCLEOTIDE SEQUENCE [LARGE SCALE GENOMIC DNA]</scope>
    <source>
        <strain>Pestoides F</strain>
    </source>
</reference>
<protein>
    <recommendedName>
        <fullName evidence="1">Elongation factor Ts</fullName>
        <shortName evidence="1">EF-Ts</shortName>
    </recommendedName>
</protein>
<name>EFTS_YERPP</name>
<dbReference type="EMBL" id="CP000668">
    <property type="protein sequence ID" value="ABP40053.1"/>
    <property type="molecule type" value="Genomic_DNA"/>
</dbReference>
<dbReference type="RefSeq" id="WP_002212132.1">
    <property type="nucleotide sequence ID" value="NZ_CP009715.1"/>
</dbReference>
<dbReference type="SMR" id="A4TL91"/>
<dbReference type="GeneID" id="96662369"/>
<dbReference type="KEGG" id="ypp:YPDSF_1668"/>
<dbReference type="PATRIC" id="fig|386656.14.peg.2095"/>
<dbReference type="GO" id="GO:0005737">
    <property type="term" value="C:cytoplasm"/>
    <property type="evidence" value="ECO:0007669"/>
    <property type="project" value="UniProtKB-SubCell"/>
</dbReference>
<dbReference type="GO" id="GO:0003746">
    <property type="term" value="F:translation elongation factor activity"/>
    <property type="evidence" value="ECO:0007669"/>
    <property type="project" value="UniProtKB-UniRule"/>
</dbReference>
<dbReference type="CDD" id="cd14275">
    <property type="entry name" value="UBA_EF-Ts"/>
    <property type="match status" value="1"/>
</dbReference>
<dbReference type="FunFam" id="1.10.286.20:FF:000001">
    <property type="entry name" value="Elongation factor Ts"/>
    <property type="match status" value="1"/>
</dbReference>
<dbReference type="FunFam" id="1.10.8.10:FF:000001">
    <property type="entry name" value="Elongation factor Ts"/>
    <property type="match status" value="1"/>
</dbReference>
<dbReference type="FunFam" id="3.30.479.20:FF:000001">
    <property type="entry name" value="Elongation factor Ts"/>
    <property type="match status" value="1"/>
</dbReference>
<dbReference type="Gene3D" id="1.10.286.20">
    <property type="match status" value="1"/>
</dbReference>
<dbReference type="Gene3D" id="1.10.8.10">
    <property type="entry name" value="DNA helicase RuvA subunit, C-terminal domain"/>
    <property type="match status" value="1"/>
</dbReference>
<dbReference type="Gene3D" id="3.30.479.20">
    <property type="entry name" value="Elongation factor Ts, dimerisation domain"/>
    <property type="match status" value="2"/>
</dbReference>
<dbReference type="HAMAP" id="MF_00050">
    <property type="entry name" value="EF_Ts"/>
    <property type="match status" value="1"/>
</dbReference>
<dbReference type="InterPro" id="IPR036402">
    <property type="entry name" value="EF-Ts_dimer_sf"/>
</dbReference>
<dbReference type="InterPro" id="IPR001816">
    <property type="entry name" value="Transl_elong_EFTs/EF1B"/>
</dbReference>
<dbReference type="InterPro" id="IPR014039">
    <property type="entry name" value="Transl_elong_EFTs/EF1B_dimer"/>
</dbReference>
<dbReference type="InterPro" id="IPR018101">
    <property type="entry name" value="Transl_elong_Ts_CS"/>
</dbReference>
<dbReference type="InterPro" id="IPR009060">
    <property type="entry name" value="UBA-like_sf"/>
</dbReference>
<dbReference type="NCBIfam" id="TIGR00116">
    <property type="entry name" value="tsf"/>
    <property type="match status" value="1"/>
</dbReference>
<dbReference type="PANTHER" id="PTHR11741">
    <property type="entry name" value="ELONGATION FACTOR TS"/>
    <property type="match status" value="1"/>
</dbReference>
<dbReference type="PANTHER" id="PTHR11741:SF0">
    <property type="entry name" value="ELONGATION FACTOR TS, MITOCHONDRIAL"/>
    <property type="match status" value="1"/>
</dbReference>
<dbReference type="Pfam" id="PF00889">
    <property type="entry name" value="EF_TS"/>
    <property type="match status" value="1"/>
</dbReference>
<dbReference type="SUPFAM" id="SSF54713">
    <property type="entry name" value="Elongation factor Ts (EF-Ts), dimerisation domain"/>
    <property type="match status" value="2"/>
</dbReference>
<dbReference type="SUPFAM" id="SSF46934">
    <property type="entry name" value="UBA-like"/>
    <property type="match status" value="1"/>
</dbReference>
<dbReference type="PROSITE" id="PS01127">
    <property type="entry name" value="EF_TS_2"/>
    <property type="match status" value="1"/>
</dbReference>
<comment type="function">
    <text evidence="1">Associates with the EF-Tu.GDP complex and induces the exchange of GDP to GTP. It remains bound to the aminoacyl-tRNA.EF-Tu.GTP complex up to the GTP hydrolysis stage on the ribosome.</text>
</comment>
<comment type="subcellular location">
    <subcellularLocation>
        <location evidence="1">Cytoplasm</location>
    </subcellularLocation>
</comment>
<comment type="similarity">
    <text evidence="1">Belongs to the EF-Ts family.</text>
</comment>
<gene>
    <name evidence="1" type="primary">tsf</name>
    <name type="ordered locus">YPDSF_1668</name>
</gene>
<sequence>MVAITAALVKELRERTAAGMMECKKALVEANGDIELAIDNMRKSGQAKAAKKAGRIAAEGIILAKVSADGKYGVILELNCETDFVAKDAGFKAFGEEVINAALAEKIADIDVLKAKFEEQRANLVAKIGENINIRRVAVLEGDILGTYLHGARIGVMVAATGADEELVKHIAMHIAASKPEYVKPDDVPAEVVAREHQIQLDIAIESGKPREIAEKMVEGRMRKFTGEVSLTGQNFVMDPSKTVGDLLKENNADVVNFIRFEVGEGIEKVETDFAAEVAAMSKQS</sequence>
<organism>
    <name type="scientific">Yersinia pestis (strain Pestoides F)</name>
    <dbReference type="NCBI Taxonomy" id="386656"/>
    <lineage>
        <taxon>Bacteria</taxon>
        <taxon>Pseudomonadati</taxon>
        <taxon>Pseudomonadota</taxon>
        <taxon>Gammaproteobacteria</taxon>
        <taxon>Enterobacterales</taxon>
        <taxon>Yersiniaceae</taxon>
        <taxon>Yersinia</taxon>
    </lineage>
</organism>
<evidence type="ECO:0000255" key="1">
    <source>
        <dbReference type="HAMAP-Rule" id="MF_00050"/>
    </source>
</evidence>
<keyword id="KW-0963">Cytoplasm</keyword>
<keyword id="KW-0251">Elongation factor</keyword>
<keyword id="KW-0648">Protein biosynthesis</keyword>
<accession>A4TL91</accession>
<proteinExistence type="inferred from homology"/>